<name>PLGB_HUMAN</name>
<dbReference type="EMBL" id="M93143">
    <property type="protein sequence ID" value="AAB06491.1"/>
    <property type="molecule type" value="mRNA"/>
</dbReference>
<dbReference type="EMBL" id="M86876">
    <property type="protein sequence ID" value="AAA60169.1"/>
    <property type="molecule type" value="Genomic_DNA"/>
</dbReference>
<dbReference type="EMBL" id="M86874">
    <property type="protein sequence ID" value="AAA60169.1"/>
    <property type="status" value="JOINED"/>
    <property type="molecule type" value="Genomic_DNA"/>
</dbReference>
<dbReference type="EMBL" id="M86875">
    <property type="protein sequence ID" value="AAA60169.1"/>
    <property type="status" value="JOINED"/>
    <property type="molecule type" value="Genomic_DNA"/>
</dbReference>
<dbReference type="EMBL" id="AC093616">
    <property type="protein sequence ID" value="AAX82025.1"/>
    <property type="molecule type" value="Genomic_DNA"/>
</dbReference>
<dbReference type="EMBL" id="BC005379">
    <property type="protein sequence ID" value="AAH05379.1"/>
    <property type="molecule type" value="mRNA"/>
</dbReference>
<dbReference type="EMBL" id="BC022294">
    <property type="protein sequence ID" value="AAH22294.1"/>
    <property type="molecule type" value="mRNA"/>
</dbReference>
<dbReference type="EMBL" id="BC109248">
    <property type="protein sequence ID" value="AAI09249.1"/>
    <property type="molecule type" value="mRNA"/>
</dbReference>
<dbReference type="CCDS" id="CCDS1999.1"/>
<dbReference type="CCDS" id="CCDS33238.1"/>
<dbReference type="PIR" id="JC1195">
    <property type="entry name" value="JC1195"/>
</dbReference>
<dbReference type="RefSeq" id="NP_001027564.1">
    <property type="nucleotide sequence ID" value="NM_001032392.4"/>
</dbReference>
<dbReference type="RefSeq" id="NP_002656.1">
    <property type="nucleotide sequence ID" value="NM_002665.4"/>
</dbReference>
<dbReference type="SMR" id="Q02325"/>
<dbReference type="FunCoup" id="Q02325">
    <property type="interactions" value="1"/>
</dbReference>
<dbReference type="STRING" id="9606.ENSP00000347933"/>
<dbReference type="GlyCosmos" id="Q02325">
    <property type="glycosylation" value="1 site, 1 glycan"/>
</dbReference>
<dbReference type="GlyGen" id="Q02325">
    <property type="glycosylation" value="1 site, 1 O-linked glycan (1 site)"/>
</dbReference>
<dbReference type="iPTMnet" id="Q02325"/>
<dbReference type="PhosphoSitePlus" id="Q02325"/>
<dbReference type="BioMuta" id="PLGLB1"/>
<dbReference type="DMDM" id="548594"/>
<dbReference type="jPOST" id="Q02325"/>
<dbReference type="MassIVE" id="Q02325"/>
<dbReference type="PaxDb" id="9606-ENSP00000347933"/>
<dbReference type="PeptideAtlas" id="Q02325"/>
<dbReference type="ProteomicsDB" id="58081"/>
<dbReference type="Antibodypedia" id="32192">
    <property type="antibodies" value="16 antibodies from 10 providers"/>
</dbReference>
<dbReference type="Antibodypedia" id="68816">
    <property type="antibodies" value="64 antibodies from 11 providers"/>
</dbReference>
<dbReference type="DNASU" id="5342"/>
<dbReference type="Ensembl" id="ENST00000355705.4">
    <property type="protein sequence ID" value="ENSP00000347933.3"/>
    <property type="gene ID" value="ENSG00000183281.15"/>
</dbReference>
<dbReference type="Ensembl" id="ENST00000359481.9">
    <property type="protein sequence ID" value="ENSP00000352458.4"/>
    <property type="gene ID" value="ENSG00000125551.19"/>
</dbReference>
<dbReference type="Ensembl" id="ENST00000409310.6">
    <property type="protein sequence ID" value="ENSP00000386505.2"/>
    <property type="gene ID" value="ENSG00000183281.15"/>
</dbReference>
<dbReference type="Ensembl" id="ENST00000409801.5">
    <property type="protein sequence ID" value="ENSP00000386975.1"/>
    <property type="gene ID" value="ENSG00000183281.15"/>
</dbReference>
<dbReference type="Ensembl" id="ENST00000410086.3">
    <property type="protein sequence ID" value="ENSP00000386317.3"/>
    <property type="gene ID" value="ENSG00000125551.19"/>
</dbReference>
<dbReference type="GeneID" id="5342"/>
<dbReference type="GeneID" id="5343"/>
<dbReference type="KEGG" id="hsa:5342"/>
<dbReference type="KEGG" id="hsa:5343"/>
<dbReference type="MANE-Select" id="ENST00000355705.4">
    <property type="protein sequence ID" value="ENSP00000347933.3"/>
    <property type="RefSeq nucleotide sequence ID" value="NM_001032392.4"/>
    <property type="RefSeq protein sequence ID" value="NP_001027564.1"/>
</dbReference>
<dbReference type="MANE-Select" id="ENST00000359481.9">
    <property type="protein sequence ID" value="ENSP00000352458.4"/>
    <property type="RefSeq nucleotide sequence ID" value="NM_002665.4"/>
    <property type="RefSeq protein sequence ID" value="NP_002656.1"/>
</dbReference>
<dbReference type="UCSC" id="uc002ssd.4">
    <property type="organism name" value="human"/>
</dbReference>
<dbReference type="AGR" id="HGNC:9072"/>
<dbReference type="AGR" id="HGNC:9073"/>
<dbReference type="CTD" id="5342"/>
<dbReference type="CTD" id="5343"/>
<dbReference type="DisGeNET" id="5342"/>
<dbReference type="DisGeNET" id="5343"/>
<dbReference type="GeneCards" id="PLGLB1"/>
<dbReference type="GeneCards" id="PLGLB2"/>
<dbReference type="HGNC" id="HGNC:9072">
    <property type="gene designation" value="PLGLB1"/>
</dbReference>
<dbReference type="HGNC" id="HGNC:9073">
    <property type="gene designation" value="PLGLB2"/>
</dbReference>
<dbReference type="HPA" id="ENSG00000125551">
    <property type="expression patterns" value="Tissue enriched (liver)"/>
</dbReference>
<dbReference type="HPA" id="ENSG00000183281">
    <property type="expression patterns" value="Tissue enhanced (brain, liver)"/>
</dbReference>
<dbReference type="MIM" id="173340">
    <property type="type" value="gene"/>
</dbReference>
<dbReference type="neXtProt" id="NX_Q02325"/>
<dbReference type="OpenTargets" id="ENSG00000125551"/>
<dbReference type="OpenTargets" id="ENSG00000183281"/>
<dbReference type="PharmGKB" id="PA33406"/>
<dbReference type="VEuPathDB" id="HostDB:ENSG00000125551"/>
<dbReference type="VEuPathDB" id="HostDB:ENSG00000183281"/>
<dbReference type="eggNOG" id="ENOG502QVNP">
    <property type="taxonomic scope" value="Eukaryota"/>
</dbReference>
<dbReference type="GeneTree" id="ENSGT00940000155208"/>
<dbReference type="HOGENOM" id="CLU_189300_0_0_1"/>
<dbReference type="InParanoid" id="Q02325"/>
<dbReference type="OMA" id="CKAFAYI"/>
<dbReference type="OrthoDB" id="41905at2759"/>
<dbReference type="PAN-GO" id="Q02325">
    <property type="GO annotations" value="3 GO annotations based on evolutionary models"/>
</dbReference>
<dbReference type="PhylomeDB" id="Q02325"/>
<dbReference type="TreeFam" id="TF344093"/>
<dbReference type="PathwayCommons" id="Q02325"/>
<dbReference type="BioGRID-ORCS" id="5342">
    <property type="hits" value="344 hits in 958 CRISPR screens"/>
</dbReference>
<dbReference type="BioGRID-ORCS" id="5343">
    <property type="hits" value="31 hits in 643 CRISPR screens"/>
</dbReference>
<dbReference type="GeneWiki" id="PLGLB2"/>
<dbReference type="Pharos" id="Q02325">
    <property type="development level" value="Tdark"/>
</dbReference>
<dbReference type="PRO" id="PR:Q02325"/>
<dbReference type="Proteomes" id="UP000005640">
    <property type="component" value="Chromosome 2"/>
</dbReference>
<dbReference type="RNAct" id="Q02325">
    <property type="molecule type" value="protein"/>
</dbReference>
<dbReference type="Bgee" id="ENSG00000125551">
    <property type="expression patterns" value="Expressed in right lobe of liver and 96 other cell types or tissues"/>
</dbReference>
<dbReference type="ExpressionAtlas" id="Q02325">
    <property type="expression patterns" value="baseline and differential"/>
</dbReference>
<dbReference type="GO" id="GO:0005576">
    <property type="term" value="C:extracellular region"/>
    <property type="evidence" value="ECO:0007669"/>
    <property type="project" value="UniProtKB-SubCell"/>
</dbReference>
<dbReference type="CDD" id="cd01099">
    <property type="entry name" value="PAN_AP_HGF"/>
    <property type="match status" value="1"/>
</dbReference>
<dbReference type="FunFam" id="3.50.4.10:FF:000011">
    <property type="entry name" value="Plasminogen"/>
    <property type="match status" value="1"/>
</dbReference>
<dbReference type="Gene3D" id="3.50.4.10">
    <property type="entry name" value="Hepatocyte Growth Factor"/>
    <property type="match status" value="1"/>
</dbReference>
<dbReference type="InterPro" id="IPR003609">
    <property type="entry name" value="Pan_app"/>
</dbReference>
<dbReference type="InterPro" id="IPR016351">
    <property type="entry name" value="Plasminogen-rel"/>
</dbReference>
<dbReference type="Pfam" id="PF00024">
    <property type="entry name" value="PAN_1"/>
    <property type="match status" value="1"/>
</dbReference>
<dbReference type="PIRSF" id="PIRSF002483">
    <property type="entry name" value="Plasminogen-related"/>
    <property type="match status" value="1"/>
</dbReference>
<dbReference type="SMART" id="SM00473">
    <property type="entry name" value="PAN_AP"/>
    <property type="match status" value="1"/>
</dbReference>
<dbReference type="SUPFAM" id="SSF57414">
    <property type="entry name" value="Hairpin loop containing domain-like"/>
    <property type="match status" value="1"/>
</dbReference>
<dbReference type="PROSITE" id="PS50948">
    <property type="entry name" value="PAN"/>
    <property type="match status" value="1"/>
</dbReference>
<feature type="signal peptide" evidence="1">
    <location>
        <begin position="1"/>
        <end position="19"/>
    </location>
</feature>
<feature type="chain" id="PRO_0000022105" description="Plasminogen-like protein B">
    <location>
        <begin position="20"/>
        <end position="96"/>
    </location>
</feature>
<feature type="domain" description="PAN" evidence="2">
    <location>
        <begin position="20"/>
        <end position="96"/>
    </location>
</feature>
<feature type="disulfide bond" evidence="2">
    <location>
        <begin position="49"/>
        <end position="73"/>
    </location>
</feature>
<feature type="disulfide bond" evidence="2">
    <location>
        <begin position="53"/>
        <end position="61"/>
    </location>
</feature>
<proteinExistence type="evidence at protein level"/>
<reference key="1">
    <citation type="journal article" date="1992" name="Biochem. Biophys. Res. Commun.">
        <title>A plasminogen-related gene is expressed in cancer cells.</title>
        <authorList>
            <person name="Weissbach L."/>
            <person name="Treadwell B.V."/>
        </authorList>
    </citation>
    <scope>NUCLEOTIDE SEQUENCE [MRNA]</scope>
</reference>
<reference key="2">
    <citation type="journal article" date="1992" name="Biochemistry">
        <title>Multiple members of the plasminogen-apolipoprotein(a) gene family associated with thrombosis.</title>
        <authorList>
            <person name="Ichinose A."/>
        </authorList>
    </citation>
    <scope>NUCLEOTIDE SEQUENCE [GENOMIC DNA]</scope>
</reference>
<reference key="3">
    <citation type="journal article" date="2005" name="Nature">
        <title>Generation and annotation of the DNA sequences of human chromosomes 2 and 4.</title>
        <authorList>
            <person name="Hillier L.W."/>
            <person name="Graves T.A."/>
            <person name="Fulton R.S."/>
            <person name="Fulton L.A."/>
            <person name="Pepin K.H."/>
            <person name="Minx P."/>
            <person name="Wagner-McPherson C."/>
            <person name="Layman D."/>
            <person name="Wylie K."/>
            <person name="Sekhon M."/>
            <person name="Becker M.C."/>
            <person name="Fewell G.A."/>
            <person name="Delehaunty K.D."/>
            <person name="Miner T.L."/>
            <person name="Nash W.E."/>
            <person name="Kremitzki C."/>
            <person name="Oddy L."/>
            <person name="Du H."/>
            <person name="Sun H."/>
            <person name="Bradshaw-Cordum H."/>
            <person name="Ali J."/>
            <person name="Carter J."/>
            <person name="Cordes M."/>
            <person name="Harris A."/>
            <person name="Isak A."/>
            <person name="van Brunt A."/>
            <person name="Nguyen C."/>
            <person name="Du F."/>
            <person name="Courtney L."/>
            <person name="Kalicki J."/>
            <person name="Ozersky P."/>
            <person name="Abbott S."/>
            <person name="Armstrong J."/>
            <person name="Belter E.A."/>
            <person name="Caruso L."/>
            <person name="Cedroni M."/>
            <person name="Cotton M."/>
            <person name="Davidson T."/>
            <person name="Desai A."/>
            <person name="Elliott G."/>
            <person name="Erb T."/>
            <person name="Fronick C."/>
            <person name="Gaige T."/>
            <person name="Haakenson W."/>
            <person name="Haglund K."/>
            <person name="Holmes A."/>
            <person name="Harkins R."/>
            <person name="Kim K."/>
            <person name="Kruchowski S.S."/>
            <person name="Strong C.M."/>
            <person name="Grewal N."/>
            <person name="Goyea E."/>
            <person name="Hou S."/>
            <person name="Levy A."/>
            <person name="Martinka S."/>
            <person name="Mead K."/>
            <person name="McLellan M.D."/>
            <person name="Meyer R."/>
            <person name="Randall-Maher J."/>
            <person name="Tomlinson C."/>
            <person name="Dauphin-Kohlberg S."/>
            <person name="Kozlowicz-Reilly A."/>
            <person name="Shah N."/>
            <person name="Swearengen-Shahid S."/>
            <person name="Snider J."/>
            <person name="Strong J.T."/>
            <person name="Thompson J."/>
            <person name="Yoakum M."/>
            <person name="Leonard S."/>
            <person name="Pearman C."/>
            <person name="Trani L."/>
            <person name="Radionenko M."/>
            <person name="Waligorski J.E."/>
            <person name="Wang C."/>
            <person name="Rock S.M."/>
            <person name="Tin-Wollam A.-M."/>
            <person name="Maupin R."/>
            <person name="Latreille P."/>
            <person name="Wendl M.C."/>
            <person name="Yang S.-P."/>
            <person name="Pohl C."/>
            <person name="Wallis J.W."/>
            <person name="Spieth J."/>
            <person name="Bieri T.A."/>
            <person name="Berkowicz N."/>
            <person name="Nelson J.O."/>
            <person name="Osborne J."/>
            <person name="Ding L."/>
            <person name="Meyer R."/>
            <person name="Sabo A."/>
            <person name="Shotland Y."/>
            <person name="Sinha P."/>
            <person name="Wohldmann P.E."/>
            <person name="Cook L.L."/>
            <person name="Hickenbotham M.T."/>
            <person name="Eldred J."/>
            <person name="Williams D."/>
            <person name="Jones T.A."/>
            <person name="She X."/>
            <person name="Ciccarelli F.D."/>
            <person name="Izaurralde E."/>
            <person name="Taylor J."/>
            <person name="Schmutz J."/>
            <person name="Myers R.M."/>
            <person name="Cox D.R."/>
            <person name="Huang X."/>
            <person name="McPherson J.D."/>
            <person name="Mardis E.R."/>
            <person name="Clifton S.W."/>
            <person name="Warren W.C."/>
            <person name="Chinwalla A.T."/>
            <person name="Eddy S.R."/>
            <person name="Marra M.A."/>
            <person name="Ovcharenko I."/>
            <person name="Furey T.S."/>
            <person name="Miller W."/>
            <person name="Eichler E.E."/>
            <person name="Bork P."/>
            <person name="Suyama M."/>
            <person name="Torrents D."/>
            <person name="Waterston R.H."/>
            <person name="Wilson R.K."/>
        </authorList>
    </citation>
    <scope>NUCLEOTIDE SEQUENCE [LARGE SCALE GENOMIC DNA]</scope>
</reference>
<reference key="4">
    <citation type="journal article" date="2004" name="Genome Res.">
        <title>The status, quality, and expansion of the NIH full-length cDNA project: the Mammalian Gene Collection (MGC).</title>
        <authorList>
            <consortium name="The MGC Project Team"/>
        </authorList>
    </citation>
    <scope>NUCLEOTIDE SEQUENCE [LARGE SCALE MRNA]</scope>
    <source>
        <tissue>Liver</tissue>
        <tissue>Skeletal muscle</tissue>
    </source>
</reference>
<sequence>MEHKEVVLLLLLFLKSGQGEPLDDYVNTQGPSLFSVTKKQLGAGSREECAAKCEEDKEFTCRAFQYHSKEQQCVIMAENRKSSIIIRMRDAVLFEK</sequence>
<protein>
    <recommendedName>
        <fullName>Plasminogen-like protein B</fullName>
    </recommendedName>
    <alternativeName>
        <fullName>Plasminogen-related protein B</fullName>
    </alternativeName>
</protein>
<organism>
    <name type="scientific">Homo sapiens</name>
    <name type="common">Human</name>
    <dbReference type="NCBI Taxonomy" id="9606"/>
    <lineage>
        <taxon>Eukaryota</taxon>
        <taxon>Metazoa</taxon>
        <taxon>Chordata</taxon>
        <taxon>Craniata</taxon>
        <taxon>Vertebrata</taxon>
        <taxon>Euteleostomi</taxon>
        <taxon>Mammalia</taxon>
        <taxon>Eutheria</taxon>
        <taxon>Euarchontoglires</taxon>
        <taxon>Primates</taxon>
        <taxon>Haplorrhini</taxon>
        <taxon>Catarrhini</taxon>
        <taxon>Hominidae</taxon>
        <taxon>Homo</taxon>
    </lineage>
</organism>
<evidence type="ECO:0000250" key="1"/>
<evidence type="ECO:0000255" key="2">
    <source>
        <dbReference type="PROSITE-ProRule" id="PRU00315"/>
    </source>
</evidence>
<keyword id="KW-1015">Disulfide bond</keyword>
<keyword id="KW-1267">Proteomics identification</keyword>
<keyword id="KW-1185">Reference proteome</keyword>
<keyword id="KW-0964">Secreted</keyword>
<keyword id="KW-0732">Signal</keyword>
<accession>Q02325</accession>
<accession>Q580R1</accession>
<comment type="function">
    <text>May bind noncovalently to lysine binding sites present in the kringle structures of plasminogen. This may interfere with the binding of fibrin or alpha-2-antiplasmin to plasminogen and may result in the localization of activity at sites necessary for extracellular matrix destruction.</text>
</comment>
<comment type="subcellular location">
    <subcellularLocation>
        <location>Secreted</location>
    </subcellularLocation>
</comment>
<gene>
    <name type="primary">PLGLB1</name>
    <name type="synonym">PLGL</name>
    <name type="synonym">PRGB</name>
</gene>
<gene>
    <name type="primary">PLGLB2</name>
    <name type="synonym">PLGP1</name>
</gene>